<accession>Q99U41</accession>
<protein>
    <recommendedName>
        <fullName evidence="1">UPF0398 protein SAV1447</fullName>
    </recommendedName>
</protein>
<sequence>MVKTVYVTGYKSFELNIFKDDAPEVHYLKQFIKHKIEQLLDEGLEWVLIQGQMGIELWTAEVVIELQRTYDSLKFAVITPFQGHTEKWNEHNQSKYANIIKHADYVDSIFHTSYQGPFQFKQADQFMLEHSDQTLLIYDEEQEASPKFFKQMLVDFMDKTNYTCDIVTFDELTAFINDLQWSEDQSF</sequence>
<feature type="chain" id="PRO_0000267172" description="UPF0398 protein SAV1447">
    <location>
        <begin position="1"/>
        <end position="187"/>
    </location>
</feature>
<reference key="1">
    <citation type="journal article" date="2001" name="Lancet">
        <title>Whole genome sequencing of meticillin-resistant Staphylococcus aureus.</title>
        <authorList>
            <person name="Kuroda M."/>
            <person name="Ohta T."/>
            <person name="Uchiyama I."/>
            <person name="Baba T."/>
            <person name="Yuzawa H."/>
            <person name="Kobayashi I."/>
            <person name="Cui L."/>
            <person name="Oguchi A."/>
            <person name="Aoki K."/>
            <person name="Nagai Y."/>
            <person name="Lian J.-Q."/>
            <person name="Ito T."/>
            <person name="Kanamori M."/>
            <person name="Matsumaru H."/>
            <person name="Maruyama A."/>
            <person name="Murakami H."/>
            <person name="Hosoyama A."/>
            <person name="Mizutani-Ui Y."/>
            <person name="Takahashi N.K."/>
            <person name="Sawano T."/>
            <person name="Inoue R."/>
            <person name="Kaito C."/>
            <person name="Sekimizu K."/>
            <person name="Hirakawa H."/>
            <person name="Kuhara S."/>
            <person name="Goto S."/>
            <person name="Yabuzaki J."/>
            <person name="Kanehisa M."/>
            <person name="Yamashita A."/>
            <person name="Oshima K."/>
            <person name="Furuya K."/>
            <person name="Yoshino C."/>
            <person name="Shiba T."/>
            <person name="Hattori M."/>
            <person name="Ogasawara N."/>
            <person name="Hayashi H."/>
            <person name="Hiramatsu K."/>
        </authorList>
    </citation>
    <scope>NUCLEOTIDE SEQUENCE [LARGE SCALE GENOMIC DNA]</scope>
    <source>
        <strain>Mu50 / ATCC 700699</strain>
    </source>
</reference>
<gene>
    <name type="ordered locus">SAV1447</name>
</gene>
<proteinExistence type="inferred from homology"/>
<name>Y1447_STAAM</name>
<dbReference type="EMBL" id="BA000017">
    <property type="protein sequence ID" value="BAB57609.1"/>
    <property type="molecule type" value="Genomic_DNA"/>
</dbReference>
<dbReference type="RefSeq" id="WP_000241308.1">
    <property type="nucleotide sequence ID" value="NC_002758.2"/>
</dbReference>
<dbReference type="SMR" id="Q99U41"/>
<dbReference type="KEGG" id="sav:SAV1447"/>
<dbReference type="HOGENOM" id="CLU_105319_0_0_9"/>
<dbReference type="PhylomeDB" id="Q99U41"/>
<dbReference type="Proteomes" id="UP000002481">
    <property type="component" value="Chromosome"/>
</dbReference>
<dbReference type="Gene3D" id="3.40.50.450">
    <property type="match status" value="1"/>
</dbReference>
<dbReference type="HAMAP" id="MF_01575">
    <property type="entry name" value="UPF0398"/>
    <property type="match status" value="1"/>
</dbReference>
<dbReference type="InterPro" id="IPR010697">
    <property type="entry name" value="YspA"/>
</dbReference>
<dbReference type="NCBIfam" id="NF010181">
    <property type="entry name" value="PRK13660.1"/>
    <property type="match status" value="1"/>
</dbReference>
<dbReference type="PANTHER" id="PTHR38440:SF1">
    <property type="entry name" value="UPF0398 PROTEIN SPR0331"/>
    <property type="match status" value="1"/>
</dbReference>
<dbReference type="PANTHER" id="PTHR38440">
    <property type="entry name" value="UPF0398 PROTEIN YPSA"/>
    <property type="match status" value="1"/>
</dbReference>
<dbReference type="Pfam" id="PF06908">
    <property type="entry name" value="YpsA"/>
    <property type="match status" value="1"/>
</dbReference>
<dbReference type="PIRSF" id="PIRSF021290">
    <property type="entry name" value="DUF1273"/>
    <property type="match status" value="1"/>
</dbReference>
<dbReference type="SUPFAM" id="SSF102405">
    <property type="entry name" value="MCP/YpsA-like"/>
    <property type="match status" value="1"/>
</dbReference>
<evidence type="ECO:0000255" key="1">
    <source>
        <dbReference type="HAMAP-Rule" id="MF_01575"/>
    </source>
</evidence>
<comment type="similarity">
    <text evidence="1">Belongs to the UPF0398 family.</text>
</comment>
<organism>
    <name type="scientific">Staphylococcus aureus (strain Mu50 / ATCC 700699)</name>
    <dbReference type="NCBI Taxonomy" id="158878"/>
    <lineage>
        <taxon>Bacteria</taxon>
        <taxon>Bacillati</taxon>
        <taxon>Bacillota</taxon>
        <taxon>Bacilli</taxon>
        <taxon>Bacillales</taxon>
        <taxon>Staphylococcaceae</taxon>
        <taxon>Staphylococcus</taxon>
    </lineage>
</organism>